<comment type="function">
    <text evidence="1">Binds as a heterodimer with protein bS6 to the central domain of the 16S rRNA, where it helps stabilize the platform of the 30S subunit.</text>
</comment>
<comment type="subunit">
    <text evidence="1">Part of the 30S ribosomal subunit. Forms a tight heterodimer with protein bS6.</text>
</comment>
<comment type="similarity">
    <text evidence="1">Belongs to the bacterial ribosomal protein bS18 family.</text>
</comment>
<organism>
    <name type="scientific">Mycoplasma mycoides subsp. mycoides SC (strain CCUG 32753 / NCTC 10114 / PG1)</name>
    <dbReference type="NCBI Taxonomy" id="272632"/>
    <lineage>
        <taxon>Bacteria</taxon>
        <taxon>Bacillati</taxon>
        <taxon>Mycoplasmatota</taxon>
        <taxon>Mollicutes</taxon>
        <taxon>Mycoplasmataceae</taxon>
        <taxon>Mycoplasma</taxon>
    </lineage>
</organism>
<gene>
    <name evidence="1" type="primary">rpsR</name>
    <name type="ordered locus">MSC_0025</name>
</gene>
<sequence length="75" mass="8915">MQVKKIKKRKKVNFFQKNNIKYIDYKDIELLKKFISPNGQILPRRITGTSPKDQRQLALAIKRARQMALLPYVIE</sequence>
<reference key="1">
    <citation type="journal article" date="2004" name="Genome Res.">
        <title>The genome sequence of Mycoplasma mycoides subsp. mycoides SC type strain PG1T, the causative agent of contagious bovine pleuropneumonia (CBPP).</title>
        <authorList>
            <person name="Westberg J."/>
            <person name="Persson A."/>
            <person name="Holmberg A."/>
            <person name="Goesmann A."/>
            <person name="Lundeberg J."/>
            <person name="Johansson K.-E."/>
            <person name="Pettersson B."/>
            <person name="Uhlen M."/>
        </authorList>
    </citation>
    <scope>NUCLEOTIDE SEQUENCE [LARGE SCALE GENOMIC DNA]</scope>
    <source>
        <strain>CCUG 32753 / NCTC 10114 / PG1</strain>
    </source>
</reference>
<keyword id="KW-1185">Reference proteome</keyword>
<keyword id="KW-0687">Ribonucleoprotein</keyword>
<keyword id="KW-0689">Ribosomal protein</keyword>
<keyword id="KW-0694">RNA-binding</keyword>
<keyword id="KW-0699">rRNA-binding</keyword>
<dbReference type="EMBL" id="BX293980">
    <property type="protein sequence ID" value="CAE76678.1"/>
    <property type="molecule type" value="Genomic_DNA"/>
</dbReference>
<dbReference type="RefSeq" id="NP_975036.1">
    <property type="nucleotide sequence ID" value="NC_005364.2"/>
</dbReference>
<dbReference type="RefSeq" id="WP_011166236.1">
    <property type="nucleotide sequence ID" value="NC_005364.2"/>
</dbReference>
<dbReference type="SMR" id="Q6MUK6"/>
<dbReference type="STRING" id="272632.MSC_0025"/>
<dbReference type="GeneID" id="93425929"/>
<dbReference type="KEGG" id="mmy:MSC_0025"/>
<dbReference type="PATRIC" id="fig|272632.4.peg.25"/>
<dbReference type="eggNOG" id="COG0238">
    <property type="taxonomic scope" value="Bacteria"/>
</dbReference>
<dbReference type="HOGENOM" id="CLU_148710_2_2_14"/>
<dbReference type="Proteomes" id="UP000001016">
    <property type="component" value="Chromosome"/>
</dbReference>
<dbReference type="GO" id="GO:0022627">
    <property type="term" value="C:cytosolic small ribosomal subunit"/>
    <property type="evidence" value="ECO:0007669"/>
    <property type="project" value="TreeGrafter"/>
</dbReference>
<dbReference type="GO" id="GO:0070181">
    <property type="term" value="F:small ribosomal subunit rRNA binding"/>
    <property type="evidence" value="ECO:0007669"/>
    <property type="project" value="TreeGrafter"/>
</dbReference>
<dbReference type="GO" id="GO:0003735">
    <property type="term" value="F:structural constituent of ribosome"/>
    <property type="evidence" value="ECO:0007669"/>
    <property type="project" value="InterPro"/>
</dbReference>
<dbReference type="GO" id="GO:0006412">
    <property type="term" value="P:translation"/>
    <property type="evidence" value="ECO:0007669"/>
    <property type="project" value="UniProtKB-UniRule"/>
</dbReference>
<dbReference type="Gene3D" id="4.10.640.10">
    <property type="entry name" value="Ribosomal protein S18"/>
    <property type="match status" value="1"/>
</dbReference>
<dbReference type="HAMAP" id="MF_00270">
    <property type="entry name" value="Ribosomal_bS18"/>
    <property type="match status" value="1"/>
</dbReference>
<dbReference type="InterPro" id="IPR001648">
    <property type="entry name" value="Ribosomal_bS18"/>
</dbReference>
<dbReference type="InterPro" id="IPR036870">
    <property type="entry name" value="Ribosomal_bS18_sf"/>
</dbReference>
<dbReference type="NCBIfam" id="TIGR00165">
    <property type="entry name" value="S18"/>
    <property type="match status" value="1"/>
</dbReference>
<dbReference type="PANTHER" id="PTHR13479">
    <property type="entry name" value="30S RIBOSOMAL PROTEIN S18"/>
    <property type="match status" value="1"/>
</dbReference>
<dbReference type="PANTHER" id="PTHR13479:SF40">
    <property type="entry name" value="SMALL RIBOSOMAL SUBUNIT PROTEIN BS18M"/>
    <property type="match status" value="1"/>
</dbReference>
<dbReference type="Pfam" id="PF01084">
    <property type="entry name" value="Ribosomal_S18"/>
    <property type="match status" value="1"/>
</dbReference>
<dbReference type="PRINTS" id="PR00974">
    <property type="entry name" value="RIBOSOMALS18"/>
</dbReference>
<dbReference type="SUPFAM" id="SSF46911">
    <property type="entry name" value="Ribosomal protein S18"/>
    <property type="match status" value="1"/>
</dbReference>
<evidence type="ECO:0000255" key="1">
    <source>
        <dbReference type="HAMAP-Rule" id="MF_00270"/>
    </source>
</evidence>
<evidence type="ECO:0000305" key="2"/>
<feature type="chain" id="PRO_0000111184" description="Small ribosomal subunit protein bS18">
    <location>
        <begin position="1"/>
        <end position="75"/>
    </location>
</feature>
<protein>
    <recommendedName>
        <fullName evidence="1">Small ribosomal subunit protein bS18</fullName>
    </recommendedName>
    <alternativeName>
        <fullName evidence="2">30S ribosomal protein S18</fullName>
    </alternativeName>
</protein>
<accession>Q6MUK6</accession>
<name>RS18_MYCMS</name>
<proteinExistence type="inferred from homology"/>